<gene>
    <name type="primary">cysS</name>
    <name type="ordered locus">PH0636</name>
</gene>
<name>SYC_PYRHO</name>
<accession>O58370</accession>
<organism>
    <name type="scientific">Pyrococcus horikoshii (strain ATCC 700860 / DSM 12428 / JCM 9974 / NBRC 100139 / OT-3)</name>
    <dbReference type="NCBI Taxonomy" id="70601"/>
    <lineage>
        <taxon>Archaea</taxon>
        <taxon>Methanobacteriati</taxon>
        <taxon>Methanobacteriota</taxon>
        <taxon>Thermococci</taxon>
        <taxon>Thermococcales</taxon>
        <taxon>Thermococcaceae</taxon>
        <taxon>Pyrococcus</taxon>
    </lineage>
</organism>
<dbReference type="EC" id="6.1.1.16"/>
<dbReference type="EMBL" id="BA000001">
    <property type="protein sequence ID" value="BAA29726.1"/>
    <property type="molecule type" value="Genomic_DNA"/>
</dbReference>
<dbReference type="PIR" id="D71108">
    <property type="entry name" value="D71108"/>
</dbReference>
<dbReference type="RefSeq" id="WP_010884735.1">
    <property type="nucleotide sequence ID" value="NC_000961.1"/>
</dbReference>
<dbReference type="SMR" id="O58370"/>
<dbReference type="STRING" id="70601.gene:9377579"/>
<dbReference type="EnsemblBacteria" id="BAA29726">
    <property type="protein sequence ID" value="BAA29726"/>
    <property type="gene ID" value="BAA29726"/>
</dbReference>
<dbReference type="GeneID" id="1442970"/>
<dbReference type="KEGG" id="pho:PH0636"/>
<dbReference type="eggNOG" id="arCOG00486">
    <property type="taxonomic scope" value="Archaea"/>
</dbReference>
<dbReference type="OrthoDB" id="9445at2157"/>
<dbReference type="Proteomes" id="UP000000752">
    <property type="component" value="Chromosome"/>
</dbReference>
<dbReference type="GO" id="GO:0005737">
    <property type="term" value="C:cytoplasm"/>
    <property type="evidence" value="ECO:0007669"/>
    <property type="project" value="UniProtKB-SubCell"/>
</dbReference>
<dbReference type="GO" id="GO:0005524">
    <property type="term" value="F:ATP binding"/>
    <property type="evidence" value="ECO:0007669"/>
    <property type="project" value="UniProtKB-UniRule"/>
</dbReference>
<dbReference type="GO" id="GO:0004817">
    <property type="term" value="F:cysteine-tRNA ligase activity"/>
    <property type="evidence" value="ECO:0007669"/>
    <property type="project" value="UniProtKB-UniRule"/>
</dbReference>
<dbReference type="GO" id="GO:0008270">
    <property type="term" value="F:zinc ion binding"/>
    <property type="evidence" value="ECO:0007669"/>
    <property type="project" value="UniProtKB-UniRule"/>
</dbReference>
<dbReference type="GO" id="GO:0006423">
    <property type="term" value="P:cysteinyl-tRNA aminoacylation"/>
    <property type="evidence" value="ECO:0007669"/>
    <property type="project" value="UniProtKB-UniRule"/>
</dbReference>
<dbReference type="CDD" id="cd00672">
    <property type="entry name" value="CysRS_core"/>
    <property type="match status" value="1"/>
</dbReference>
<dbReference type="FunFam" id="3.40.50.620:FF:000009">
    <property type="entry name" value="Cysteine--tRNA ligase"/>
    <property type="match status" value="1"/>
</dbReference>
<dbReference type="Gene3D" id="1.20.120.1910">
    <property type="entry name" value="Cysteine-tRNA ligase, C-terminal anti-codon recognition domain"/>
    <property type="match status" value="1"/>
</dbReference>
<dbReference type="Gene3D" id="3.40.50.620">
    <property type="entry name" value="HUPs"/>
    <property type="match status" value="1"/>
</dbReference>
<dbReference type="HAMAP" id="MF_00041">
    <property type="entry name" value="Cys_tRNA_synth"/>
    <property type="match status" value="1"/>
</dbReference>
<dbReference type="InterPro" id="IPR015803">
    <property type="entry name" value="Cys-tRNA-ligase"/>
</dbReference>
<dbReference type="InterPro" id="IPR015273">
    <property type="entry name" value="Cys-tRNA-synt_Ia_DALR"/>
</dbReference>
<dbReference type="InterPro" id="IPR024909">
    <property type="entry name" value="Cys-tRNA/MSH_ligase"/>
</dbReference>
<dbReference type="InterPro" id="IPR014729">
    <property type="entry name" value="Rossmann-like_a/b/a_fold"/>
</dbReference>
<dbReference type="InterPro" id="IPR032678">
    <property type="entry name" value="tRNA-synt_1_cat_dom"/>
</dbReference>
<dbReference type="InterPro" id="IPR009080">
    <property type="entry name" value="tRNAsynth_Ia_anticodon-bd"/>
</dbReference>
<dbReference type="NCBIfam" id="TIGR00435">
    <property type="entry name" value="cysS"/>
    <property type="match status" value="1"/>
</dbReference>
<dbReference type="PANTHER" id="PTHR10890:SF3">
    <property type="entry name" value="CYSTEINE--TRNA LIGASE, CYTOPLASMIC"/>
    <property type="match status" value="1"/>
</dbReference>
<dbReference type="PANTHER" id="PTHR10890">
    <property type="entry name" value="CYSTEINYL-TRNA SYNTHETASE"/>
    <property type="match status" value="1"/>
</dbReference>
<dbReference type="Pfam" id="PF09190">
    <property type="entry name" value="DALR_2"/>
    <property type="match status" value="1"/>
</dbReference>
<dbReference type="Pfam" id="PF01406">
    <property type="entry name" value="tRNA-synt_1e"/>
    <property type="match status" value="1"/>
</dbReference>
<dbReference type="PRINTS" id="PR00983">
    <property type="entry name" value="TRNASYNTHCYS"/>
</dbReference>
<dbReference type="SMART" id="SM00840">
    <property type="entry name" value="DALR_2"/>
    <property type="match status" value="1"/>
</dbReference>
<dbReference type="SUPFAM" id="SSF47323">
    <property type="entry name" value="Anticodon-binding domain of a subclass of class I aminoacyl-tRNA synthetases"/>
    <property type="match status" value="1"/>
</dbReference>
<dbReference type="SUPFAM" id="SSF52374">
    <property type="entry name" value="Nucleotidylyl transferase"/>
    <property type="match status" value="1"/>
</dbReference>
<protein>
    <recommendedName>
        <fullName>Cysteine--tRNA ligase</fullName>
        <ecNumber>6.1.1.16</ecNumber>
    </recommendedName>
    <alternativeName>
        <fullName>Cysteinyl-tRNA synthetase</fullName>
        <shortName>CysRS</shortName>
    </alternativeName>
</protein>
<evidence type="ECO:0000250" key="1"/>
<evidence type="ECO:0000305" key="2"/>
<reference key="1">
    <citation type="journal article" date="1998" name="DNA Res.">
        <title>Complete sequence and gene organization of the genome of a hyper-thermophilic archaebacterium, Pyrococcus horikoshii OT3.</title>
        <authorList>
            <person name="Kawarabayasi Y."/>
            <person name="Sawada M."/>
            <person name="Horikawa H."/>
            <person name="Haikawa Y."/>
            <person name="Hino Y."/>
            <person name="Yamamoto S."/>
            <person name="Sekine M."/>
            <person name="Baba S."/>
            <person name="Kosugi H."/>
            <person name="Hosoyama A."/>
            <person name="Nagai Y."/>
            <person name="Sakai M."/>
            <person name="Ogura K."/>
            <person name="Otsuka R."/>
            <person name="Nakazawa H."/>
            <person name="Takamiya M."/>
            <person name="Ohfuku Y."/>
            <person name="Funahashi T."/>
            <person name="Tanaka T."/>
            <person name="Kudoh Y."/>
            <person name="Yamazaki J."/>
            <person name="Kushida N."/>
            <person name="Oguchi A."/>
            <person name="Aoki K."/>
            <person name="Yoshizawa T."/>
            <person name="Nakamura Y."/>
            <person name="Robb F.T."/>
            <person name="Horikoshi K."/>
            <person name="Masuchi Y."/>
            <person name="Shizuya H."/>
            <person name="Kikuchi H."/>
        </authorList>
    </citation>
    <scope>NUCLEOTIDE SEQUENCE [LARGE SCALE GENOMIC DNA]</scope>
    <source>
        <strain>ATCC 700860 / DSM 12428 / JCM 9974 / NBRC 100139 / OT-3</strain>
    </source>
</reference>
<sequence>MTLRIYNTLTKQKEEFKPINEGEVRMYVCGPTVYDYPHLGHARTYIAFDVIRRYLEHKGYSVLMVMNFTDIDDKIIRRAKETGEDPAKLAEKFIKVFLEDMKALKVKPADIYPRVTEHIEDIIQFIERLKEKGYAYEGSDGVYFEVQKFKEYGKLSGVKLEELRKGARVEPGEGKKNPEDFALWKKAKPGEPKWESPWGEGRPGWHIECSVMSSKYLGESFDIHGGGNDLIFPHHENEIAQSEACFGHEWVHYWLHTGFVMVKGEKMSKSLGNFVTVRELLQRYSPEVIRFFVLQKHYRSPLDYSEEGLQHAKNNLERLYNTLENIRIAMENAELAYTWDENDFKAYNSIKEARRKFYEAMDDDFNTAEALKAVFEVSNAINKYITEAEKPKESVLRKAWEFFRTVGEIFGIFEEYFKEEKAKEEEKLIELLIQVRAELRKERKFELADKIREELRKLGIQLEDKGKETIWKRIKV</sequence>
<feature type="chain" id="PRO_0000159543" description="Cysteine--tRNA ligase">
    <location>
        <begin position="1"/>
        <end position="476"/>
    </location>
</feature>
<feature type="short sequence motif" description="'HIGH' region">
    <location>
        <begin position="31"/>
        <end position="41"/>
    </location>
</feature>
<feature type="short sequence motif" description="'KMSKS' region">
    <location>
        <begin position="266"/>
        <end position="270"/>
    </location>
</feature>
<feature type="binding site" evidence="1">
    <location>
        <position position="29"/>
    </location>
    <ligand>
        <name>Zn(2+)</name>
        <dbReference type="ChEBI" id="CHEBI:29105"/>
    </ligand>
</feature>
<feature type="binding site" evidence="1">
    <location>
        <position position="209"/>
    </location>
    <ligand>
        <name>Zn(2+)</name>
        <dbReference type="ChEBI" id="CHEBI:29105"/>
    </ligand>
</feature>
<feature type="binding site" evidence="1">
    <location>
        <position position="234"/>
    </location>
    <ligand>
        <name>Zn(2+)</name>
        <dbReference type="ChEBI" id="CHEBI:29105"/>
    </ligand>
</feature>
<feature type="binding site" evidence="1">
    <location>
        <position position="238"/>
    </location>
    <ligand>
        <name>Zn(2+)</name>
        <dbReference type="ChEBI" id="CHEBI:29105"/>
    </ligand>
</feature>
<feature type="binding site" evidence="1">
    <location>
        <position position="269"/>
    </location>
    <ligand>
        <name>ATP</name>
        <dbReference type="ChEBI" id="CHEBI:30616"/>
    </ligand>
</feature>
<keyword id="KW-0030">Aminoacyl-tRNA synthetase</keyword>
<keyword id="KW-0067">ATP-binding</keyword>
<keyword id="KW-0963">Cytoplasm</keyword>
<keyword id="KW-0436">Ligase</keyword>
<keyword id="KW-0479">Metal-binding</keyword>
<keyword id="KW-0547">Nucleotide-binding</keyword>
<keyword id="KW-0648">Protein biosynthesis</keyword>
<keyword id="KW-0862">Zinc</keyword>
<proteinExistence type="inferred from homology"/>
<comment type="catalytic activity">
    <reaction>
        <text>tRNA(Cys) + L-cysteine + ATP = L-cysteinyl-tRNA(Cys) + AMP + diphosphate</text>
        <dbReference type="Rhea" id="RHEA:17773"/>
        <dbReference type="Rhea" id="RHEA-COMP:9661"/>
        <dbReference type="Rhea" id="RHEA-COMP:9679"/>
        <dbReference type="ChEBI" id="CHEBI:30616"/>
        <dbReference type="ChEBI" id="CHEBI:33019"/>
        <dbReference type="ChEBI" id="CHEBI:35235"/>
        <dbReference type="ChEBI" id="CHEBI:78442"/>
        <dbReference type="ChEBI" id="CHEBI:78517"/>
        <dbReference type="ChEBI" id="CHEBI:456215"/>
        <dbReference type="EC" id="6.1.1.16"/>
    </reaction>
</comment>
<comment type="cofactor">
    <cofactor evidence="1">
        <name>Zn(2+)</name>
        <dbReference type="ChEBI" id="CHEBI:29105"/>
    </cofactor>
    <text evidence="1">Binds 1 zinc ion per subunit.</text>
</comment>
<comment type="subcellular location">
    <subcellularLocation>
        <location evidence="1">Cytoplasm</location>
    </subcellularLocation>
</comment>
<comment type="similarity">
    <text evidence="2">Belongs to the class-I aminoacyl-tRNA synthetase family.</text>
</comment>